<dbReference type="EC" id="5.1.1.7" evidence="1"/>
<dbReference type="EMBL" id="CP001157">
    <property type="protein sequence ID" value="ACO80875.1"/>
    <property type="molecule type" value="Genomic_DNA"/>
</dbReference>
<dbReference type="RefSeq" id="WP_012703237.1">
    <property type="nucleotide sequence ID" value="NC_012560.1"/>
</dbReference>
<dbReference type="SMR" id="C1DJ56"/>
<dbReference type="STRING" id="322710.Avin_47710"/>
<dbReference type="EnsemblBacteria" id="ACO80875">
    <property type="protein sequence ID" value="ACO80875"/>
    <property type="gene ID" value="Avin_47710"/>
</dbReference>
<dbReference type="GeneID" id="88187643"/>
<dbReference type="KEGG" id="avn:Avin_47710"/>
<dbReference type="eggNOG" id="COG0253">
    <property type="taxonomic scope" value="Bacteria"/>
</dbReference>
<dbReference type="HOGENOM" id="CLU_053306_1_1_6"/>
<dbReference type="OrthoDB" id="9805408at2"/>
<dbReference type="UniPathway" id="UPA00034">
    <property type="reaction ID" value="UER00025"/>
</dbReference>
<dbReference type="Proteomes" id="UP000002424">
    <property type="component" value="Chromosome"/>
</dbReference>
<dbReference type="GO" id="GO:0005829">
    <property type="term" value="C:cytosol"/>
    <property type="evidence" value="ECO:0007669"/>
    <property type="project" value="TreeGrafter"/>
</dbReference>
<dbReference type="GO" id="GO:0008837">
    <property type="term" value="F:diaminopimelate epimerase activity"/>
    <property type="evidence" value="ECO:0007669"/>
    <property type="project" value="UniProtKB-UniRule"/>
</dbReference>
<dbReference type="GO" id="GO:0009089">
    <property type="term" value="P:lysine biosynthetic process via diaminopimelate"/>
    <property type="evidence" value="ECO:0007669"/>
    <property type="project" value="UniProtKB-UniRule"/>
</dbReference>
<dbReference type="FunFam" id="3.10.310.10:FF:000001">
    <property type="entry name" value="Diaminopimelate epimerase"/>
    <property type="match status" value="1"/>
</dbReference>
<dbReference type="FunFam" id="3.10.310.10:FF:000004">
    <property type="entry name" value="Diaminopimelate epimerase"/>
    <property type="match status" value="1"/>
</dbReference>
<dbReference type="Gene3D" id="3.10.310.10">
    <property type="entry name" value="Diaminopimelate Epimerase, Chain A, domain 1"/>
    <property type="match status" value="2"/>
</dbReference>
<dbReference type="HAMAP" id="MF_00197">
    <property type="entry name" value="DAP_epimerase"/>
    <property type="match status" value="1"/>
</dbReference>
<dbReference type="InterPro" id="IPR018510">
    <property type="entry name" value="DAP_epimerase_AS"/>
</dbReference>
<dbReference type="InterPro" id="IPR001653">
    <property type="entry name" value="DAP_epimerase_DapF"/>
</dbReference>
<dbReference type="NCBIfam" id="TIGR00652">
    <property type="entry name" value="DapF"/>
    <property type="match status" value="1"/>
</dbReference>
<dbReference type="PANTHER" id="PTHR31689:SF0">
    <property type="entry name" value="DIAMINOPIMELATE EPIMERASE"/>
    <property type="match status" value="1"/>
</dbReference>
<dbReference type="PANTHER" id="PTHR31689">
    <property type="entry name" value="DIAMINOPIMELATE EPIMERASE, CHLOROPLASTIC"/>
    <property type="match status" value="1"/>
</dbReference>
<dbReference type="Pfam" id="PF01678">
    <property type="entry name" value="DAP_epimerase"/>
    <property type="match status" value="2"/>
</dbReference>
<dbReference type="SUPFAM" id="SSF54506">
    <property type="entry name" value="Diaminopimelate epimerase-like"/>
    <property type="match status" value="1"/>
</dbReference>
<dbReference type="PROSITE" id="PS01326">
    <property type="entry name" value="DAP_EPIMERASE"/>
    <property type="match status" value="1"/>
</dbReference>
<proteinExistence type="inferred from homology"/>
<reference key="1">
    <citation type="journal article" date="2009" name="J. Bacteriol.">
        <title>Genome sequence of Azotobacter vinelandii, an obligate aerobe specialized to support diverse anaerobic metabolic processes.</title>
        <authorList>
            <person name="Setubal J.C."/>
            <person name="Dos Santos P."/>
            <person name="Goldman B.S."/>
            <person name="Ertesvaag H."/>
            <person name="Espin G."/>
            <person name="Rubio L.M."/>
            <person name="Valla S."/>
            <person name="Almeida N.F."/>
            <person name="Balasubramanian D."/>
            <person name="Cromes L."/>
            <person name="Curatti L."/>
            <person name="Du Z."/>
            <person name="Godsy E."/>
            <person name="Goodner B."/>
            <person name="Hellner-Burris K."/>
            <person name="Hernandez J.A."/>
            <person name="Houmiel K."/>
            <person name="Imperial J."/>
            <person name="Kennedy C."/>
            <person name="Larson T.J."/>
            <person name="Latreille P."/>
            <person name="Ligon L.S."/>
            <person name="Lu J."/>
            <person name="Maerk M."/>
            <person name="Miller N.M."/>
            <person name="Norton S."/>
            <person name="O'Carroll I.P."/>
            <person name="Paulsen I."/>
            <person name="Raulfs E.C."/>
            <person name="Roemer R."/>
            <person name="Rosser J."/>
            <person name="Segura D."/>
            <person name="Slater S."/>
            <person name="Stricklin S.L."/>
            <person name="Studholme D.J."/>
            <person name="Sun J."/>
            <person name="Viana C.J."/>
            <person name="Wallin E."/>
            <person name="Wang B."/>
            <person name="Wheeler C."/>
            <person name="Zhu H."/>
            <person name="Dean D.R."/>
            <person name="Dixon R."/>
            <person name="Wood D."/>
        </authorList>
    </citation>
    <scope>NUCLEOTIDE SEQUENCE [LARGE SCALE GENOMIC DNA]</scope>
    <source>
        <strain>DJ / ATCC BAA-1303</strain>
    </source>
</reference>
<name>DAPF_AZOVD</name>
<accession>C1DJ56</accession>
<feature type="chain" id="PRO_1000204055" description="Diaminopimelate epimerase">
    <location>
        <begin position="1"/>
        <end position="276"/>
    </location>
</feature>
<feature type="active site" description="Proton donor" evidence="1">
    <location>
        <position position="75"/>
    </location>
</feature>
<feature type="active site" description="Proton acceptor" evidence="1">
    <location>
        <position position="219"/>
    </location>
</feature>
<feature type="binding site" evidence="1">
    <location>
        <position position="13"/>
    </location>
    <ligand>
        <name>substrate</name>
    </ligand>
</feature>
<feature type="binding site" evidence="1">
    <location>
        <position position="46"/>
    </location>
    <ligand>
        <name>substrate</name>
    </ligand>
</feature>
<feature type="binding site" evidence="1">
    <location>
        <position position="66"/>
    </location>
    <ligand>
        <name>substrate</name>
    </ligand>
</feature>
<feature type="binding site" evidence="1">
    <location>
        <begin position="76"/>
        <end position="77"/>
    </location>
    <ligand>
        <name>substrate</name>
    </ligand>
</feature>
<feature type="binding site" evidence="1">
    <location>
        <position position="159"/>
    </location>
    <ligand>
        <name>substrate</name>
    </ligand>
</feature>
<feature type="binding site" evidence="1">
    <location>
        <position position="192"/>
    </location>
    <ligand>
        <name>substrate</name>
    </ligand>
</feature>
<feature type="binding site" evidence="1">
    <location>
        <begin position="210"/>
        <end position="211"/>
    </location>
    <ligand>
        <name>substrate</name>
    </ligand>
</feature>
<feature type="binding site" evidence="1">
    <location>
        <begin position="220"/>
        <end position="221"/>
    </location>
    <ligand>
        <name>substrate</name>
    </ligand>
</feature>
<feature type="site" description="Could be important to modulate the pK values of the two catalytic cysteine residues" evidence="1">
    <location>
        <position position="161"/>
    </location>
</feature>
<feature type="site" description="Could be important to modulate the pK values of the two catalytic cysteine residues" evidence="1">
    <location>
        <position position="210"/>
    </location>
</feature>
<feature type="site" description="Important for dimerization" evidence="1">
    <location>
        <position position="270"/>
    </location>
</feature>
<comment type="function">
    <text evidence="1">Catalyzes the stereoinversion of LL-2,6-diaminopimelate (L,L-DAP) to meso-diaminopimelate (meso-DAP), a precursor of L-lysine and an essential component of the bacterial peptidoglycan.</text>
</comment>
<comment type="catalytic activity">
    <reaction evidence="1">
        <text>(2S,6S)-2,6-diaminopimelate = meso-2,6-diaminopimelate</text>
        <dbReference type="Rhea" id="RHEA:15393"/>
        <dbReference type="ChEBI" id="CHEBI:57609"/>
        <dbReference type="ChEBI" id="CHEBI:57791"/>
        <dbReference type="EC" id="5.1.1.7"/>
    </reaction>
</comment>
<comment type="pathway">
    <text evidence="1">Amino-acid biosynthesis; L-lysine biosynthesis via DAP pathway; DL-2,6-diaminopimelate from LL-2,6-diaminopimelate: step 1/1.</text>
</comment>
<comment type="subunit">
    <text evidence="1">Homodimer.</text>
</comment>
<comment type="subcellular location">
    <subcellularLocation>
        <location evidence="1">Cytoplasm</location>
    </subcellularLocation>
</comment>
<comment type="similarity">
    <text evidence="1">Belongs to the diaminopimelate epimerase family.</text>
</comment>
<gene>
    <name evidence="1" type="primary">dapF</name>
    <name type="ordered locus">Avin_47710</name>
</gene>
<protein>
    <recommendedName>
        <fullName evidence="1">Diaminopimelate epimerase</fullName>
        <shortName evidence="1">DAP epimerase</shortName>
        <ecNumber evidence="1">5.1.1.7</ecNumber>
    </recommendedName>
    <alternativeName>
        <fullName evidence="1">PLP-independent amino acid racemase</fullName>
    </alternativeName>
</protein>
<organism>
    <name type="scientific">Azotobacter vinelandii (strain DJ / ATCC BAA-1303)</name>
    <dbReference type="NCBI Taxonomy" id="322710"/>
    <lineage>
        <taxon>Bacteria</taxon>
        <taxon>Pseudomonadati</taxon>
        <taxon>Pseudomonadota</taxon>
        <taxon>Gammaproteobacteria</taxon>
        <taxon>Pseudomonadales</taxon>
        <taxon>Pseudomonadaceae</taxon>
        <taxon>Azotobacter</taxon>
    </lineage>
</organism>
<sequence length="276" mass="30647">MLLRFTKMHGLGNDFMVIDLVTQHAHIQPKHAKQWGDRHTGIGFDQLLIVEPPSRPDVDFRYRIFNADGSEVEQCGNGARCFARFVLDKRLTVKKRIRVETRSGVIELDVRPDGQVCVDMGPPRLEPREIPFQAENAALDYQVEVDGCEVELAALSMGNPHAVLRVENVESAPVHELGPKLEHHPRFPQRVNVGFLQVVDRQHARLRVWERGAGETQACGTGACAAAVAAIRQGWMDSPVLVDLPGGRLSIAWAGPDQSVMMTGPAVRVYEGQVRL</sequence>
<evidence type="ECO:0000255" key="1">
    <source>
        <dbReference type="HAMAP-Rule" id="MF_00197"/>
    </source>
</evidence>
<keyword id="KW-0028">Amino-acid biosynthesis</keyword>
<keyword id="KW-0963">Cytoplasm</keyword>
<keyword id="KW-0413">Isomerase</keyword>
<keyword id="KW-0457">Lysine biosynthesis</keyword>